<comment type="domain">
    <text evidence="1">The protein kinase domain is predicted to be catalytically inactive.</text>
</comment>
<comment type="similarity">
    <text evidence="4">Belongs to the protein kinase superfamily. Ser/Thr protein kinase family. ZRK subfamily.</text>
</comment>
<comment type="sequence caution" evidence="4">
    <conflict type="erroneous initiation">
        <sequence resource="EMBL-CDS" id="AGX29390"/>
    </conflict>
    <text>Truncated N-terminus.</text>
</comment>
<comment type="sequence caution" evidence="4">
    <conflict type="erroneous initiation">
        <sequence resource="EMBL-CDS" id="AGX29395"/>
    </conflict>
    <text>Truncated N-terminus.</text>
</comment>
<comment type="sequence caution" evidence="4">
    <conflict type="erroneous initiation">
        <sequence resource="EMBL-CDS" id="AGX29396"/>
    </conflict>
    <text>Truncated N-terminus.</text>
</comment>
<comment type="sequence caution" evidence="4">
    <conflict type="erroneous initiation">
        <sequence resource="EMBL-CDS" id="AGX29397"/>
    </conflict>
    <text>Truncated N-terminus.</text>
</comment>
<comment type="sequence caution" evidence="4">
    <conflict type="erroneous initiation">
        <sequence resource="EMBL-CDS" id="AGX29399"/>
    </conflict>
    <text>Truncated N-terminus.</text>
</comment>
<comment type="sequence caution" evidence="4">
    <conflict type="erroneous initiation">
        <sequence resource="EMBL-CDS" id="AGX29400"/>
    </conflict>
    <text>Truncated N-terminus.</text>
</comment>
<comment type="sequence caution" evidence="4">
    <conflict type="erroneous initiation">
        <sequence resource="EMBL-CDS" id="AGX29402"/>
    </conflict>
    <text>Truncated N-terminus.</text>
</comment>
<comment type="sequence caution" evidence="4">
    <conflict type="erroneous initiation">
        <sequence resource="EMBL-CDS" id="AGX29403"/>
    </conflict>
    <text>Truncated N-terminus.</text>
</comment>
<comment type="sequence caution" evidence="4">
    <conflict type="erroneous initiation">
        <sequence resource="EMBL-CDS" id="AGX29404"/>
    </conflict>
    <text>Truncated N-terminus.</text>
</comment>
<comment type="sequence caution" evidence="4">
    <conflict type="erroneous initiation">
        <sequence resource="EMBL-CDS" id="AGX29405"/>
    </conflict>
    <text>Truncated N-terminus.</text>
</comment>
<comment type="sequence caution" evidence="4">
    <conflict type="erroneous initiation">
        <sequence resource="EMBL-CDS" id="AGX29414"/>
    </conflict>
    <text>Truncated N-terminus.</text>
</comment>
<comment type="sequence caution" evidence="4">
    <conflict type="erroneous initiation">
        <sequence resource="EMBL-CDS" id="AGX29418"/>
    </conflict>
    <text>Truncated N-terminus.</text>
</comment>
<comment type="sequence caution" evidence="4">
    <conflict type="erroneous initiation">
        <sequence resource="EMBL-CDS" id="AGX29421"/>
    </conflict>
    <text>Truncated N-terminus.</text>
</comment>
<comment type="sequence caution" evidence="4">
    <conflict type="erroneous initiation">
        <sequence resource="EMBL-CDS" id="AGX29424"/>
    </conflict>
    <text>Truncated N-terminus.</text>
</comment>
<comment type="sequence caution" evidence="4">
    <conflict type="erroneous initiation">
        <sequence resource="EMBL-CDS" id="AGX29425"/>
    </conflict>
    <text>Truncated N-terminus.</text>
</comment>
<comment type="sequence caution" evidence="4">
    <conflict type="erroneous initiation">
        <sequence resource="EMBL-CDS" id="AGX29428"/>
    </conflict>
    <text>Truncated N-terminus.</text>
</comment>
<comment type="sequence caution" evidence="4">
    <conflict type="erroneous initiation">
        <sequence resource="EMBL-CDS" id="AGX29429"/>
    </conflict>
    <text>Truncated N-terminus.</text>
</comment>
<comment type="sequence caution" evidence="4">
    <conflict type="erroneous initiation">
        <sequence resource="EMBL-CDS" id="AGX29430"/>
    </conflict>
    <text>Truncated N-terminus.</text>
</comment>
<comment type="sequence caution" evidence="4">
    <conflict type="erroneous initiation">
        <sequence resource="EMBL-CDS" id="AGX29431"/>
    </conflict>
    <text>Truncated N-terminus.</text>
</comment>
<comment type="sequence caution" evidence="4">
    <conflict type="erroneous initiation">
        <sequence resource="EMBL-CDS" id="AGX29432"/>
    </conflict>
    <text>Truncated N-terminus.</text>
</comment>
<comment type="sequence caution" evidence="4">
    <conflict type="erroneous initiation">
        <sequence resource="EMBL-CDS" id="AGX29438"/>
    </conflict>
    <text>Truncated N-terminus.</text>
</comment>
<comment type="sequence caution" evidence="4">
    <conflict type="erroneous initiation">
        <sequence resource="EMBL-CDS" id="AGX29439"/>
    </conflict>
    <text>Truncated N-terminus.</text>
</comment>
<comment type="sequence caution" evidence="4">
    <conflict type="erroneous initiation">
        <sequence resource="EMBL-CDS" id="AGX29443"/>
    </conflict>
    <text>Truncated N-terminus.</text>
</comment>
<comment type="sequence caution" evidence="4">
    <conflict type="erroneous initiation">
        <sequence resource="EMBL-CDS" id="AGX29444"/>
    </conflict>
    <text>Truncated N-terminus.</text>
</comment>
<comment type="sequence caution" evidence="4">
    <conflict type="erroneous initiation">
        <sequence resource="EMBL-CDS" id="AGX29448"/>
    </conflict>
    <text>Truncated N-terminus.</text>
</comment>
<comment type="sequence caution" evidence="4">
    <conflict type="erroneous initiation">
        <sequence resource="EMBL-CDS" id="AGX29449"/>
    </conflict>
    <text>Truncated N-terminus.</text>
</comment>
<comment type="sequence caution" evidence="4">
    <conflict type="erroneous initiation">
        <sequence resource="EMBL-CDS" id="AGX29450"/>
    </conflict>
    <text>Truncated N-terminus.</text>
</comment>
<comment type="sequence caution" evidence="4">
    <conflict type="erroneous initiation">
        <sequence resource="EMBL-CDS" id="AGX29451"/>
    </conflict>
    <text>Truncated N-terminus.</text>
</comment>
<comment type="sequence caution" evidence="4">
    <conflict type="erroneous initiation">
        <sequence resource="EMBL-CDS" id="AGX29460"/>
    </conflict>
    <text>Truncated N-terminus.</text>
</comment>
<comment type="sequence caution" evidence="4">
    <conflict type="erroneous initiation">
        <sequence resource="EMBL-CDS" id="AGX29465"/>
    </conflict>
    <text>Truncated N-terminus.</text>
</comment>
<comment type="sequence caution" evidence="4">
    <conflict type="erroneous initiation">
        <sequence resource="EMBL-CDS" id="AGX29466"/>
    </conflict>
    <text>Truncated N-terminus.</text>
</comment>
<comment type="sequence caution" evidence="4">
    <conflict type="erroneous initiation">
        <sequence resource="EMBL-CDS" id="AGX29468"/>
    </conflict>
    <text>Truncated N-terminus.</text>
</comment>
<comment type="sequence caution" evidence="4">
    <conflict type="erroneous initiation">
        <sequence resource="EMBL-CDS" id="AGX29469"/>
    </conflict>
    <text>Truncated N-terminus.</text>
</comment>
<comment type="sequence caution" evidence="4">
    <conflict type="erroneous initiation">
        <sequence resource="EMBL-CDS" id="AGX29471"/>
    </conflict>
    <text>Truncated N-terminus.</text>
</comment>
<comment type="sequence caution" evidence="4">
    <conflict type="erroneous initiation">
        <sequence resource="EMBL-CDS" id="AGX29472"/>
    </conflict>
    <text>Truncated N-terminus.</text>
</comment>
<comment type="sequence caution" evidence="4">
    <conflict type="erroneous initiation">
        <sequence resource="EMBL-CDS" id="AGX29474"/>
    </conflict>
    <text>Truncated N-terminus.</text>
</comment>
<comment type="sequence caution" evidence="4">
    <conflict type="erroneous initiation">
        <sequence resource="EMBL-CDS" id="AGX29475"/>
    </conflict>
    <text>Truncated N-terminus.</text>
</comment>
<comment type="sequence caution" evidence="4">
    <conflict type="erroneous initiation">
        <sequence resource="EMBL-CDS" id="AGX29476"/>
    </conflict>
    <text>Truncated N-terminus.</text>
</comment>
<comment type="sequence caution" evidence="4">
    <conflict type="erroneous initiation">
        <sequence resource="EMBL-CDS" id="AGX29479"/>
    </conflict>
    <text>Truncated N-terminus.</text>
</comment>
<comment type="sequence caution" evidence="4">
    <conflict type="erroneous initiation">
        <sequence resource="EMBL-CDS" id="AGX29480"/>
    </conflict>
    <text>Truncated N-terminus.</text>
</comment>
<comment type="sequence caution" evidence="4">
    <conflict type="erroneous initiation">
        <sequence resource="EMBL-CDS" id="AGX29482"/>
    </conflict>
    <text>Truncated N-terminus.</text>
</comment>
<comment type="sequence caution" evidence="4">
    <conflict type="erroneous initiation">
        <sequence resource="EMBL-CDS" id="AGX29483"/>
    </conflict>
    <text>Truncated N-terminus.</text>
</comment>
<comment type="sequence caution" evidence="4">
    <conflict type="erroneous initiation">
        <sequence resource="EMBL-CDS" id="CAB41183"/>
    </conflict>
    <text>Truncated N-terminus.</text>
</comment>
<organism>
    <name type="scientific">Arabidopsis thaliana</name>
    <name type="common">Mouse-ear cress</name>
    <dbReference type="NCBI Taxonomy" id="3702"/>
    <lineage>
        <taxon>Eukaryota</taxon>
        <taxon>Viridiplantae</taxon>
        <taxon>Streptophyta</taxon>
        <taxon>Embryophyta</taxon>
        <taxon>Tracheophyta</taxon>
        <taxon>Spermatophyta</taxon>
        <taxon>Magnoliopsida</taxon>
        <taxon>eudicotyledons</taxon>
        <taxon>Gunneridae</taxon>
        <taxon>Pentapetalae</taxon>
        <taxon>rosids</taxon>
        <taxon>malvids</taxon>
        <taxon>Brassicales</taxon>
        <taxon>Brassicaceae</taxon>
        <taxon>Camelineae</taxon>
        <taxon>Arabidopsis</taxon>
    </lineage>
</organism>
<gene>
    <name evidence="3" type="primary">ZRK2</name>
    <name evidence="5" type="ordered locus">At3g57720</name>
    <name evidence="6" type="ORF">F15B8.90</name>
</gene>
<feature type="chain" id="PRO_0000449490" description="Non-functional pseudokinase ZRK2">
    <location>
        <begin position="1"/>
        <end position="359"/>
    </location>
</feature>
<feature type="domain" description="Protein kinase" evidence="1">
    <location>
        <begin position="64"/>
        <end position="356"/>
    </location>
</feature>
<feature type="region of interest" description="Disordered" evidence="2">
    <location>
        <begin position="1"/>
        <end position="20"/>
    </location>
</feature>
<feature type="compositionally biased region" description="Basic residues" evidence="2">
    <location>
        <begin position="1"/>
        <end position="10"/>
    </location>
</feature>
<feature type="binding site" evidence="1">
    <location>
        <begin position="70"/>
        <end position="78"/>
    </location>
    <ligand>
        <name>ATP</name>
        <dbReference type="ChEBI" id="CHEBI:30616"/>
    </ligand>
</feature>
<feature type="binding site" evidence="1">
    <location>
        <position position="97"/>
    </location>
    <ligand>
        <name>ATP</name>
        <dbReference type="ChEBI" id="CHEBI:30616"/>
    </ligand>
</feature>
<proteinExistence type="evidence at transcript level"/>
<keyword id="KW-0067">ATP-binding</keyword>
<keyword id="KW-0547">Nucleotide-binding</keyword>
<keyword id="KW-1185">Reference proteome</keyword>
<dbReference type="EMBL" id="KF363735">
    <property type="protein sequence ID" value="AGX29390.1"/>
    <property type="status" value="ALT_INIT"/>
    <property type="molecule type" value="Genomic_DNA"/>
</dbReference>
<dbReference type="EMBL" id="KF363740">
    <property type="protein sequence ID" value="AGX29395.1"/>
    <property type="status" value="ALT_INIT"/>
    <property type="molecule type" value="Genomic_DNA"/>
</dbReference>
<dbReference type="EMBL" id="KF363741">
    <property type="protein sequence ID" value="AGX29396.1"/>
    <property type="status" value="ALT_INIT"/>
    <property type="molecule type" value="Genomic_DNA"/>
</dbReference>
<dbReference type="EMBL" id="KF363742">
    <property type="protein sequence ID" value="AGX29397.1"/>
    <property type="status" value="ALT_INIT"/>
    <property type="molecule type" value="Genomic_DNA"/>
</dbReference>
<dbReference type="EMBL" id="KF363744">
    <property type="protein sequence ID" value="AGX29399.1"/>
    <property type="status" value="ALT_INIT"/>
    <property type="molecule type" value="Genomic_DNA"/>
</dbReference>
<dbReference type="EMBL" id="KF363745">
    <property type="protein sequence ID" value="AGX29400.1"/>
    <property type="status" value="ALT_INIT"/>
    <property type="molecule type" value="Genomic_DNA"/>
</dbReference>
<dbReference type="EMBL" id="KF363747">
    <property type="protein sequence ID" value="AGX29402.1"/>
    <property type="status" value="ALT_INIT"/>
    <property type="molecule type" value="Genomic_DNA"/>
</dbReference>
<dbReference type="EMBL" id="KF363748">
    <property type="protein sequence ID" value="AGX29403.1"/>
    <property type="status" value="ALT_INIT"/>
    <property type="molecule type" value="Genomic_DNA"/>
</dbReference>
<dbReference type="EMBL" id="KF363749">
    <property type="protein sequence ID" value="AGX29404.1"/>
    <property type="status" value="ALT_INIT"/>
    <property type="molecule type" value="Genomic_DNA"/>
</dbReference>
<dbReference type="EMBL" id="KF363750">
    <property type="protein sequence ID" value="AGX29405.1"/>
    <property type="status" value="ALT_INIT"/>
    <property type="molecule type" value="Genomic_DNA"/>
</dbReference>
<dbReference type="EMBL" id="KF363759">
    <property type="protein sequence ID" value="AGX29414.1"/>
    <property type="status" value="ALT_INIT"/>
    <property type="molecule type" value="Genomic_DNA"/>
</dbReference>
<dbReference type="EMBL" id="KF363763">
    <property type="protein sequence ID" value="AGX29418.1"/>
    <property type="status" value="ALT_INIT"/>
    <property type="molecule type" value="Genomic_DNA"/>
</dbReference>
<dbReference type="EMBL" id="KF363766">
    <property type="protein sequence ID" value="AGX29421.1"/>
    <property type="status" value="ALT_INIT"/>
    <property type="molecule type" value="Genomic_DNA"/>
</dbReference>
<dbReference type="EMBL" id="KF363769">
    <property type="protein sequence ID" value="AGX29424.1"/>
    <property type="status" value="ALT_INIT"/>
    <property type="molecule type" value="Genomic_DNA"/>
</dbReference>
<dbReference type="EMBL" id="KF363770">
    <property type="protein sequence ID" value="AGX29425.1"/>
    <property type="status" value="ALT_INIT"/>
    <property type="molecule type" value="Genomic_DNA"/>
</dbReference>
<dbReference type="EMBL" id="KF363773">
    <property type="protein sequence ID" value="AGX29428.1"/>
    <property type="status" value="ALT_INIT"/>
    <property type="molecule type" value="Genomic_DNA"/>
</dbReference>
<dbReference type="EMBL" id="KF363774">
    <property type="protein sequence ID" value="AGX29429.1"/>
    <property type="status" value="ALT_INIT"/>
    <property type="molecule type" value="Genomic_DNA"/>
</dbReference>
<dbReference type="EMBL" id="KF363775">
    <property type="protein sequence ID" value="AGX29430.1"/>
    <property type="status" value="ALT_INIT"/>
    <property type="molecule type" value="Genomic_DNA"/>
</dbReference>
<dbReference type="EMBL" id="KF363776">
    <property type="protein sequence ID" value="AGX29431.1"/>
    <property type="status" value="ALT_INIT"/>
    <property type="molecule type" value="Genomic_DNA"/>
</dbReference>
<dbReference type="EMBL" id="KF363777">
    <property type="protein sequence ID" value="AGX29432.1"/>
    <property type="status" value="ALT_INIT"/>
    <property type="molecule type" value="Genomic_DNA"/>
</dbReference>
<dbReference type="EMBL" id="KF363783">
    <property type="protein sequence ID" value="AGX29438.1"/>
    <property type="status" value="ALT_INIT"/>
    <property type="molecule type" value="Genomic_DNA"/>
</dbReference>
<dbReference type="EMBL" id="KF363784">
    <property type="protein sequence ID" value="AGX29439.1"/>
    <property type="status" value="ALT_INIT"/>
    <property type="molecule type" value="Genomic_DNA"/>
</dbReference>
<dbReference type="EMBL" id="KF363789">
    <property type="protein sequence ID" value="AGX29443.1"/>
    <property type="status" value="ALT_INIT"/>
    <property type="molecule type" value="Genomic_DNA"/>
</dbReference>
<dbReference type="EMBL" id="KF363790">
    <property type="protein sequence ID" value="AGX29444.1"/>
    <property type="status" value="ALT_INIT"/>
    <property type="molecule type" value="Genomic_DNA"/>
</dbReference>
<dbReference type="EMBL" id="KF363794">
    <property type="protein sequence ID" value="AGX29448.1"/>
    <property type="status" value="ALT_INIT"/>
    <property type="molecule type" value="Genomic_DNA"/>
</dbReference>
<dbReference type="EMBL" id="KF363795">
    <property type="protein sequence ID" value="AGX29449.1"/>
    <property type="status" value="ALT_INIT"/>
    <property type="molecule type" value="Genomic_DNA"/>
</dbReference>
<dbReference type="EMBL" id="KF363796">
    <property type="protein sequence ID" value="AGX29450.1"/>
    <property type="status" value="ALT_INIT"/>
    <property type="molecule type" value="Genomic_DNA"/>
</dbReference>
<dbReference type="EMBL" id="KF363797">
    <property type="protein sequence ID" value="AGX29451.1"/>
    <property type="status" value="ALT_INIT"/>
    <property type="molecule type" value="Genomic_DNA"/>
</dbReference>
<dbReference type="EMBL" id="KF363806">
    <property type="protein sequence ID" value="AGX29460.1"/>
    <property type="status" value="ALT_INIT"/>
    <property type="molecule type" value="Genomic_DNA"/>
</dbReference>
<dbReference type="EMBL" id="KF363811">
    <property type="protein sequence ID" value="AGX29465.1"/>
    <property type="status" value="ALT_INIT"/>
    <property type="molecule type" value="Genomic_DNA"/>
</dbReference>
<dbReference type="EMBL" id="KF363812">
    <property type="protein sequence ID" value="AGX29466.1"/>
    <property type="status" value="ALT_INIT"/>
    <property type="molecule type" value="Genomic_DNA"/>
</dbReference>
<dbReference type="EMBL" id="KF363814">
    <property type="protein sequence ID" value="AGX29468.1"/>
    <property type="status" value="ALT_INIT"/>
    <property type="molecule type" value="Genomic_DNA"/>
</dbReference>
<dbReference type="EMBL" id="KF363815">
    <property type="protein sequence ID" value="AGX29469.1"/>
    <property type="status" value="ALT_INIT"/>
    <property type="molecule type" value="Genomic_DNA"/>
</dbReference>
<dbReference type="EMBL" id="KF363817">
    <property type="protein sequence ID" value="AGX29471.1"/>
    <property type="status" value="ALT_INIT"/>
    <property type="molecule type" value="Genomic_DNA"/>
</dbReference>
<dbReference type="EMBL" id="KF363818">
    <property type="protein sequence ID" value="AGX29472.1"/>
    <property type="status" value="ALT_INIT"/>
    <property type="molecule type" value="Genomic_DNA"/>
</dbReference>
<dbReference type="EMBL" id="KF363820">
    <property type="protein sequence ID" value="AGX29474.1"/>
    <property type="status" value="ALT_INIT"/>
    <property type="molecule type" value="Genomic_DNA"/>
</dbReference>
<dbReference type="EMBL" id="KF363821">
    <property type="protein sequence ID" value="AGX29475.1"/>
    <property type="status" value="ALT_INIT"/>
    <property type="molecule type" value="Genomic_DNA"/>
</dbReference>
<dbReference type="EMBL" id="KF363822">
    <property type="protein sequence ID" value="AGX29476.1"/>
    <property type="status" value="ALT_INIT"/>
    <property type="molecule type" value="Genomic_DNA"/>
</dbReference>
<dbReference type="EMBL" id="KF363825">
    <property type="protein sequence ID" value="AGX29479.1"/>
    <property type="status" value="ALT_INIT"/>
    <property type="molecule type" value="Genomic_DNA"/>
</dbReference>
<dbReference type="EMBL" id="KF363826">
    <property type="protein sequence ID" value="AGX29480.1"/>
    <property type="status" value="ALT_INIT"/>
    <property type="molecule type" value="Genomic_DNA"/>
</dbReference>
<dbReference type="EMBL" id="KF363828">
    <property type="protein sequence ID" value="AGX29482.1"/>
    <property type="status" value="ALT_INIT"/>
    <property type="molecule type" value="Genomic_DNA"/>
</dbReference>
<dbReference type="EMBL" id="KF363829">
    <property type="protein sequence ID" value="AGX29483.1"/>
    <property type="status" value="ALT_INIT"/>
    <property type="molecule type" value="Genomic_DNA"/>
</dbReference>
<dbReference type="EMBL" id="AL049660">
    <property type="protein sequence ID" value="CAB41183.1"/>
    <property type="status" value="ALT_INIT"/>
    <property type="molecule type" value="Genomic_DNA"/>
</dbReference>
<dbReference type="EMBL" id="CP002686">
    <property type="protein sequence ID" value="AEE79690.1"/>
    <property type="molecule type" value="Genomic_DNA"/>
</dbReference>
<dbReference type="EMBL" id="BT029494">
    <property type="protein sequence ID" value="ABL66751.1"/>
    <property type="molecule type" value="mRNA"/>
</dbReference>
<dbReference type="PIR" id="T06748">
    <property type="entry name" value="T06748"/>
</dbReference>
<dbReference type="RefSeq" id="NP_191331.2">
    <property type="nucleotide sequence ID" value="NM_115632.3"/>
</dbReference>
<dbReference type="SMR" id="Q9SVY6"/>
<dbReference type="FunCoup" id="Q9SVY6">
    <property type="interactions" value="186"/>
</dbReference>
<dbReference type="STRING" id="3702.A1A6H5"/>
<dbReference type="PaxDb" id="3702-AT3G57720.1"/>
<dbReference type="ProteomicsDB" id="174773"/>
<dbReference type="EnsemblPlants" id="AT3G57720.1">
    <property type="protein sequence ID" value="AT3G57720.1"/>
    <property type="gene ID" value="AT3G57720"/>
</dbReference>
<dbReference type="GeneID" id="824941"/>
<dbReference type="Gramene" id="AT3G57720.1">
    <property type="protein sequence ID" value="AT3G57720.1"/>
    <property type="gene ID" value="AT3G57720"/>
</dbReference>
<dbReference type="KEGG" id="ath:AT3G57720"/>
<dbReference type="Araport" id="AT3G57720"/>
<dbReference type="TAIR" id="AT3G57720">
    <property type="gene designation" value="ZRK2"/>
</dbReference>
<dbReference type="eggNOG" id="KOG1187">
    <property type="taxonomic scope" value="Eukaryota"/>
</dbReference>
<dbReference type="HOGENOM" id="CLU_000288_21_4_1"/>
<dbReference type="InParanoid" id="Q9SVY6"/>
<dbReference type="OMA" id="CCELRDE"/>
<dbReference type="OrthoDB" id="75710at2759"/>
<dbReference type="PRO" id="PR:Q9SVY6"/>
<dbReference type="Proteomes" id="UP000006548">
    <property type="component" value="Chromosome 3"/>
</dbReference>
<dbReference type="ExpressionAtlas" id="Q9SVY6">
    <property type="expression patterns" value="baseline and differential"/>
</dbReference>
<dbReference type="GO" id="GO:0005524">
    <property type="term" value="F:ATP binding"/>
    <property type="evidence" value="ECO:0007669"/>
    <property type="project" value="UniProtKB-KW"/>
</dbReference>
<dbReference type="GO" id="GO:0004672">
    <property type="term" value="F:protein kinase activity"/>
    <property type="evidence" value="ECO:0007669"/>
    <property type="project" value="InterPro"/>
</dbReference>
<dbReference type="GO" id="GO:0007166">
    <property type="term" value="P:cell surface receptor signaling pathway"/>
    <property type="evidence" value="ECO:0007669"/>
    <property type="project" value="InterPro"/>
</dbReference>
<dbReference type="FunFam" id="3.30.200.20:FF:000886">
    <property type="entry name" value="At3g57720"/>
    <property type="match status" value="1"/>
</dbReference>
<dbReference type="FunFam" id="1.10.510.10:FF:000774">
    <property type="entry name" value="Kinase family protein"/>
    <property type="match status" value="1"/>
</dbReference>
<dbReference type="Gene3D" id="3.30.200.20">
    <property type="entry name" value="Phosphorylase Kinase, domain 1"/>
    <property type="match status" value="1"/>
</dbReference>
<dbReference type="Gene3D" id="1.10.510.10">
    <property type="entry name" value="Transferase(Phosphotransferase) domain 1"/>
    <property type="match status" value="1"/>
</dbReference>
<dbReference type="InterPro" id="IPR011009">
    <property type="entry name" value="Kinase-like_dom_sf"/>
</dbReference>
<dbReference type="InterPro" id="IPR000719">
    <property type="entry name" value="Prot_kinase_dom"/>
</dbReference>
<dbReference type="InterPro" id="IPR045274">
    <property type="entry name" value="WAK-like"/>
</dbReference>
<dbReference type="PANTHER" id="PTHR27005:SF308">
    <property type="entry name" value="NON-FUNCTIONAL PSEUDOKINASE ZRK2-RELATED"/>
    <property type="match status" value="1"/>
</dbReference>
<dbReference type="PANTHER" id="PTHR27005">
    <property type="entry name" value="WALL-ASSOCIATED RECEPTOR KINASE-LIKE 21"/>
    <property type="match status" value="1"/>
</dbReference>
<dbReference type="Pfam" id="PF00069">
    <property type="entry name" value="Pkinase"/>
    <property type="match status" value="1"/>
</dbReference>
<dbReference type="SUPFAM" id="SSF56112">
    <property type="entry name" value="Protein kinase-like (PK-like)"/>
    <property type="match status" value="1"/>
</dbReference>
<dbReference type="PROSITE" id="PS50011">
    <property type="entry name" value="PROTEIN_KINASE_DOM"/>
    <property type="match status" value="1"/>
</dbReference>
<protein>
    <recommendedName>
        <fullName evidence="3">Non-functional pseudokinase ZRK2</fullName>
    </recommendedName>
</protein>
<name>ZRK2_ARATH</name>
<sequence length="359" mass="41037">MKSMVKKLKQSLRSGSLEKRKEKEKDIQEEKWFLDNGSIFLKELIADCNGKSIPIRNFSSDQILKATSNFGSSCFVTAEGFYVWYKGIIEDRSYMIKRFSEYKVTQYRVAEVYNEIVLSARMSNHNNFLKLIGFCLEFSLPVLVFEYAEHGVLNHRGGVIVNGEEVILPLSLRLKIGKEIANAVTYLHMAFPKILIHRHIKPRNVFLDENWTPKLSDFSISINLPEGKSRIEVECVQGTIGYLDPVYYTTKMVTEYTDVYSFGVFLMVILTGKPALASTSSDGDYKHIASYVKGFHENGQLDGVIDPKVMEDITSAQKVHVEACVVLALRCCELRDENRPKMIQIAKELKQIETLFRRS</sequence>
<reference key="1">
    <citation type="journal article" date="2013" name="PLoS Genet.">
        <title>An atypical kinase under balancing selection confers broad-spectrum disease resistance in Arabidopsis.</title>
        <authorList>
            <person name="Huard-Chauveau C."/>
            <person name="Perchepied L."/>
            <person name="Debieu M."/>
            <person name="Rivas S."/>
            <person name="Kroj T."/>
            <person name="Kars I."/>
            <person name="Bergelson J."/>
            <person name="Roux F."/>
            <person name="Roby D."/>
        </authorList>
    </citation>
    <scope>NUCLEOTIDE SEQUENCE [GENOMIC DNA]</scope>
    <source>
        <strain>cv. Ag-0</strain>
        <strain>cv. Bor-1</strain>
        <strain>cv. Bor-4</strain>
        <strain>cv. Br-0</strain>
        <strain>cv. C24</strain>
        <strain>cv. CIBC-17</strain>
        <strain>cv. Columbia</strain>
        <strain>cv. Ct-1</strain>
        <strain>cv. Cvi-0</strain>
        <strain>cv. Ga-0</strain>
        <strain>cv. Gy-0</strain>
        <strain>cv. Kas-1</strain>
        <strain>cv. KNO-18</strain>
        <strain>cv. Kon</strain>
        <strain>cv. Ler-1</strain>
        <strain>cv. Ll-0</strain>
        <strain>cv. Lov-1</strain>
        <strain>cv. Lov-5</strain>
        <strain>cv. Lp2-2</strain>
        <strain>cv. Mt-0</strain>
        <strain>cv. Mz-0</strain>
        <strain>cv. N13 Konchezero</strain>
        <strain>cv. Omo2-1</strain>
        <strain>cv. Omo2-3</strain>
        <strain>cv. Pro-0</strain>
        <strain>cv. Pu2-23</strain>
        <strain>cv. Pu2-7</strain>
        <strain>cv. Ra-0</strain>
        <strain>cv. Sorbo</strain>
        <strain>cv. Tamm-2</strain>
        <strain>cv. Tamm-27</strain>
        <strain>cv. Ts-5</strain>
        <strain>cv. Tsu-1</strain>
        <strain>cv. Ull2-5</strain>
        <strain>cv. Uod-1</strain>
        <strain>cv. Var2-1</strain>
        <strain>cv. Var2-6</strain>
        <strain>cv. Wa-1</strain>
        <strain>cv. Wassilewskija-2</strain>
        <strain>cv. Wt-5</strain>
        <strain>cv. Zdr-1</strain>
        <strain>cv. Zdr-6</strain>
    </source>
</reference>
<reference key="2">
    <citation type="journal article" date="2000" name="Nature">
        <title>Sequence and analysis of chromosome 3 of the plant Arabidopsis thaliana.</title>
        <authorList>
            <person name="Salanoubat M."/>
            <person name="Lemcke K."/>
            <person name="Rieger M."/>
            <person name="Ansorge W."/>
            <person name="Unseld M."/>
            <person name="Fartmann B."/>
            <person name="Valle G."/>
            <person name="Bloecker H."/>
            <person name="Perez-Alonso M."/>
            <person name="Obermaier B."/>
            <person name="Delseny M."/>
            <person name="Boutry M."/>
            <person name="Grivell L.A."/>
            <person name="Mache R."/>
            <person name="Puigdomenech P."/>
            <person name="De Simone V."/>
            <person name="Choisne N."/>
            <person name="Artiguenave F."/>
            <person name="Robert C."/>
            <person name="Brottier P."/>
            <person name="Wincker P."/>
            <person name="Cattolico L."/>
            <person name="Weissenbach J."/>
            <person name="Saurin W."/>
            <person name="Quetier F."/>
            <person name="Schaefer M."/>
            <person name="Mueller-Auer S."/>
            <person name="Gabel C."/>
            <person name="Fuchs M."/>
            <person name="Benes V."/>
            <person name="Wurmbach E."/>
            <person name="Drzonek H."/>
            <person name="Erfle H."/>
            <person name="Jordan N."/>
            <person name="Bangert S."/>
            <person name="Wiedelmann R."/>
            <person name="Kranz H."/>
            <person name="Voss H."/>
            <person name="Holland R."/>
            <person name="Brandt P."/>
            <person name="Nyakatura G."/>
            <person name="Vezzi A."/>
            <person name="D'Angelo M."/>
            <person name="Pallavicini A."/>
            <person name="Toppo S."/>
            <person name="Simionati B."/>
            <person name="Conrad A."/>
            <person name="Hornischer K."/>
            <person name="Kauer G."/>
            <person name="Loehnert T.-H."/>
            <person name="Nordsiek G."/>
            <person name="Reichelt J."/>
            <person name="Scharfe M."/>
            <person name="Schoen O."/>
            <person name="Bargues M."/>
            <person name="Terol J."/>
            <person name="Climent J."/>
            <person name="Navarro P."/>
            <person name="Collado C."/>
            <person name="Perez-Perez A."/>
            <person name="Ottenwaelder B."/>
            <person name="Duchemin D."/>
            <person name="Cooke R."/>
            <person name="Laudie M."/>
            <person name="Berger-Llauro C."/>
            <person name="Purnelle B."/>
            <person name="Masuy D."/>
            <person name="de Haan M."/>
            <person name="Maarse A.C."/>
            <person name="Alcaraz J.-P."/>
            <person name="Cottet A."/>
            <person name="Casacuberta E."/>
            <person name="Monfort A."/>
            <person name="Argiriou A."/>
            <person name="Flores M."/>
            <person name="Liguori R."/>
            <person name="Vitale D."/>
            <person name="Mannhaupt G."/>
            <person name="Haase D."/>
            <person name="Schoof H."/>
            <person name="Rudd S."/>
            <person name="Zaccaria P."/>
            <person name="Mewes H.-W."/>
            <person name="Mayer K.F.X."/>
            <person name="Kaul S."/>
            <person name="Town C.D."/>
            <person name="Koo H.L."/>
            <person name="Tallon L.J."/>
            <person name="Jenkins J."/>
            <person name="Rooney T."/>
            <person name="Rizzo M."/>
            <person name="Walts A."/>
            <person name="Utterback T."/>
            <person name="Fujii C.Y."/>
            <person name="Shea T.P."/>
            <person name="Creasy T.H."/>
            <person name="Haas B."/>
            <person name="Maiti R."/>
            <person name="Wu D."/>
            <person name="Peterson J."/>
            <person name="Van Aken S."/>
            <person name="Pai G."/>
            <person name="Militscher J."/>
            <person name="Sellers P."/>
            <person name="Gill J.E."/>
            <person name="Feldblyum T.V."/>
            <person name="Preuss D."/>
            <person name="Lin X."/>
            <person name="Nierman W.C."/>
            <person name="Salzberg S.L."/>
            <person name="White O."/>
            <person name="Venter J.C."/>
            <person name="Fraser C.M."/>
            <person name="Kaneko T."/>
            <person name="Nakamura Y."/>
            <person name="Sato S."/>
            <person name="Kato T."/>
            <person name="Asamizu E."/>
            <person name="Sasamoto S."/>
            <person name="Kimura T."/>
            <person name="Idesawa K."/>
            <person name="Kawashima K."/>
            <person name="Kishida Y."/>
            <person name="Kiyokawa C."/>
            <person name="Kohara M."/>
            <person name="Matsumoto M."/>
            <person name="Matsuno A."/>
            <person name="Muraki A."/>
            <person name="Nakayama S."/>
            <person name="Nakazaki N."/>
            <person name="Shinpo S."/>
            <person name="Takeuchi C."/>
            <person name="Wada T."/>
            <person name="Watanabe A."/>
            <person name="Yamada M."/>
            <person name="Yasuda M."/>
            <person name="Tabata S."/>
        </authorList>
    </citation>
    <scope>NUCLEOTIDE SEQUENCE [LARGE SCALE GENOMIC DNA]</scope>
    <source>
        <strain>cv. Columbia</strain>
    </source>
</reference>
<reference key="3">
    <citation type="journal article" date="2017" name="Plant J.">
        <title>Araport11: a complete reannotation of the Arabidopsis thaliana reference genome.</title>
        <authorList>
            <person name="Cheng C.Y."/>
            <person name="Krishnakumar V."/>
            <person name="Chan A.P."/>
            <person name="Thibaud-Nissen F."/>
            <person name="Schobel S."/>
            <person name="Town C.D."/>
        </authorList>
    </citation>
    <scope>GENOME REANNOTATION</scope>
    <source>
        <strain>cv. Columbia</strain>
    </source>
</reference>
<reference key="4">
    <citation type="submission" date="2006-12" db="EMBL/GenBank/DDBJ databases">
        <title>Arabidopsis ORF clones.</title>
        <authorList>
            <person name="Bautista V.R."/>
            <person name="Kim C.J."/>
            <person name="Chen H."/>
            <person name="Quinitio C."/>
            <person name="Ecker J.R."/>
        </authorList>
    </citation>
    <scope>NUCLEOTIDE SEQUENCE [LARGE SCALE MRNA]</scope>
    <source>
        <strain>cv. Columbia</strain>
    </source>
</reference>
<reference key="5">
    <citation type="journal article" date="2015" name="Cell Host Microbe">
        <title>The decoy substrate of a pathogen effector and a pseudokinase specify pathogen-induced modified-self recognition and immunity in plants.</title>
        <authorList>
            <person name="Wang G."/>
            <person name="Roux B."/>
            <person name="Feng F."/>
            <person name="Guy E."/>
            <person name="Li L."/>
            <person name="Li N."/>
            <person name="Zhang X."/>
            <person name="Lautier M."/>
            <person name="Jardinaud M.-F."/>
            <person name="Chabannes M."/>
            <person name="Arlat M."/>
            <person name="Chen S."/>
            <person name="He C."/>
            <person name="Noel L.D."/>
            <person name="Zhou J.-M."/>
        </authorList>
    </citation>
    <scope>GENE FAMILY</scope>
    <scope>NOMENCLATURE</scope>
    <source>
        <strain>cv. Columbia</strain>
    </source>
</reference>
<evidence type="ECO:0000255" key="1">
    <source>
        <dbReference type="PROSITE-ProRule" id="PRU00159"/>
    </source>
</evidence>
<evidence type="ECO:0000256" key="2">
    <source>
        <dbReference type="SAM" id="MobiDB-lite"/>
    </source>
</evidence>
<evidence type="ECO:0000303" key="3">
    <source>
    </source>
</evidence>
<evidence type="ECO:0000305" key="4"/>
<evidence type="ECO:0000312" key="5">
    <source>
        <dbReference type="Araport" id="AT3G57720"/>
    </source>
</evidence>
<evidence type="ECO:0000312" key="6">
    <source>
        <dbReference type="EMBL" id="CAB41183.1"/>
    </source>
</evidence>
<accession>Q9SVY6</accession>
<accession>A0A178VIX1</accession>
<accession>A1A6H5</accession>